<gene>
    <name type="primary">gsb</name>
    <name type="synonym">GSB-D</name>
    <name type="synonym">GSBB</name>
    <name type="ORF">CG3388</name>
</gene>
<proteinExistence type="evidence at transcript level"/>
<dbReference type="EMBL" id="M14944">
    <property type="protein sequence ID" value="AAA28836.1"/>
    <property type="molecule type" value="mRNA"/>
</dbReference>
<dbReference type="EMBL" id="M14942">
    <property type="protein sequence ID" value="AAA28837.1"/>
    <property type="molecule type" value="mRNA"/>
</dbReference>
<dbReference type="EMBL" id="AE013599">
    <property type="protein sequence ID" value="AAF47315.2"/>
    <property type="molecule type" value="Genomic_DNA"/>
</dbReference>
<dbReference type="PIR" id="A43698">
    <property type="entry name" value="A43698"/>
</dbReference>
<dbReference type="RefSeq" id="NP_523863.1">
    <property type="nucleotide sequence ID" value="NM_079139.4"/>
</dbReference>
<dbReference type="SMR" id="P09082"/>
<dbReference type="BioGRID" id="63573">
    <property type="interactions" value="13"/>
</dbReference>
<dbReference type="DIP" id="DIP-18421N"/>
<dbReference type="FunCoup" id="P09082">
    <property type="interactions" value="26"/>
</dbReference>
<dbReference type="IntAct" id="P09082">
    <property type="interactions" value="4"/>
</dbReference>
<dbReference type="STRING" id="7227.FBpp0072349"/>
<dbReference type="PaxDb" id="7227-FBpp0072349"/>
<dbReference type="DNASU" id="38005"/>
<dbReference type="EnsemblMetazoa" id="FBtr0072444">
    <property type="protein sequence ID" value="FBpp0072349"/>
    <property type="gene ID" value="FBgn0001148"/>
</dbReference>
<dbReference type="GeneID" id="38005"/>
<dbReference type="KEGG" id="dme:Dmel_CG3388"/>
<dbReference type="AGR" id="FB:FBgn0001148"/>
<dbReference type="CTD" id="38005"/>
<dbReference type="FlyBase" id="FBgn0001148">
    <property type="gene designation" value="gsb"/>
</dbReference>
<dbReference type="VEuPathDB" id="VectorBase:FBgn0001148"/>
<dbReference type="eggNOG" id="KOG0849">
    <property type="taxonomic scope" value="Eukaryota"/>
</dbReference>
<dbReference type="GeneTree" id="ENSGT00940000168362"/>
<dbReference type="HOGENOM" id="CLU_019281_0_0_1"/>
<dbReference type="InParanoid" id="P09082"/>
<dbReference type="OMA" id="SWDSYNF"/>
<dbReference type="OrthoDB" id="3225452at2759"/>
<dbReference type="PhylomeDB" id="P09082"/>
<dbReference type="Reactome" id="R-DME-3214847">
    <property type="pathway name" value="HATs acetylate histones"/>
</dbReference>
<dbReference type="SignaLink" id="P09082"/>
<dbReference type="BioGRID-ORCS" id="38005">
    <property type="hits" value="0 hits in 3 CRISPR screens"/>
</dbReference>
<dbReference type="GenomeRNAi" id="38005"/>
<dbReference type="PRO" id="PR:P09082"/>
<dbReference type="Proteomes" id="UP000000803">
    <property type="component" value="Chromosome 2R"/>
</dbReference>
<dbReference type="Bgee" id="FBgn0001148">
    <property type="expression patterns" value="Expressed in epithelial cell in male reproductive gland and 29 other cell types or tissues"/>
</dbReference>
<dbReference type="ExpressionAtlas" id="P09082">
    <property type="expression patterns" value="baseline and differential"/>
</dbReference>
<dbReference type="GO" id="GO:0005737">
    <property type="term" value="C:cytoplasm"/>
    <property type="evidence" value="ECO:0000315"/>
    <property type="project" value="FlyBase"/>
</dbReference>
<dbReference type="GO" id="GO:0005634">
    <property type="term" value="C:nucleus"/>
    <property type="evidence" value="ECO:0000315"/>
    <property type="project" value="FlyBase"/>
</dbReference>
<dbReference type="GO" id="GO:0045202">
    <property type="term" value="C:synapse"/>
    <property type="evidence" value="ECO:0007669"/>
    <property type="project" value="GOC"/>
</dbReference>
<dbReference type="GO" id="GO:0000981">
    <property type="term" value="F:DNA-binding transcription factor activity, RNA polymerase II-specific"/>
    <property type="evidence" value="ECO:0000318"/>
    <property type="project" value="GO_Central"/>
</dbReference>
<dbReference type="GO" id="GO:0000978">
    <property type="term" value="F:RNA polymerase II cis-regulatory region sequence-specific DNA binding"/>
    <property type="evidence" value="ECO:0000318"/>
    <property type="project" value="GO_Central"/>
</dbReference>
<dbReference type="GO" id="GO:0000977">
    <property type="term" value="F:RNA polymerase II transcription regulatory region sequence-specific DNA binding"/>
    <property type="evidence" value="ECO:0000314"/>
    <property type="project" value="FlyBase"/>
</dbReference>
<dbReference type="GO" id="GO:0007268">
    <property type="term" value="P:chemical synaptic transmission"/>
    <property type="evidence" value="ECO:0000314"/>
    <property type="project" value="FlyBase"/>
</dbReference>
<dbReference type="GO" id="GO:0007399">
    <property type="term" value="P:nervous system development"/>
    <property type="evidence" value="ECO:0000318"/>
    <property type="project" value="GO_Central"/>
</dbReference>
<dbReference type="GO" id="GO:0022008">
    <property type="term" value="P:neurogenesis"/>
    <property type="evidence" value="ECO:0000315"/>
    <property type="project" value="FlyBase"/>
</dbReference>
<dbReference type="GO" id="GO:0060025">
    <property type="term" value="P:regulation of synaptic activity"/>
    <property type="evidence" value="ECO:0000314"/>
    <property type="project" value="FlyBase"/>
</dbReference>
<dbReference type="GO" id="GO:0006357">
    <property type="term" value="P:regulation of transcription by RNA polymerase II"/>
    <property type="evidence" value="ECO:0000318"/>
    <property type="project" value="GO_Central"/>
</dbReference>
<dbReference type="GO" id="GO:0007435">
    <property type="term" value="P:salivary gland morphogenesis"/>
    <property type="evidence" value="ECO:0000315"/>
    <property type="project" value="FlyBase"/>
</dbReference>
<dbReference type="GO" id="GO:0007367">
    <property type="term" value="P:segment polarity determination"/>
    <property type="evidence" value="ECO:0000316"/>
    <property type="project" value="FlyBase"/>
</dbReference>
<dbReference type="GO" id="GO:0007419">
    <property type="term" value="P:ventral cord development"/>
    <property type="evidence" value="ECO:0000304"/>
    <property type="project" value="FlyBase"/>
</dbReference>
<dbReference type="CDD" id="cd00086">
    <property type="entry name" value="homeodomain"/>
    <property type="match status" value="1"/>
</dbReference>
<dbReference type="CDD" id="cd00131">
    <property type="entry name" value="PAX"/>
    <property type="match status" value="1"/>
</dbReference>
<dbReference type="FunFam" id="1.10.10.10:FF:000494">
    <property type="entry name" value="Blast:Protein gooseberry-neuro"/>
    <property type="match status" value="1"/>
</dbReference>
<dbReference type="FunFam" id="1.10.10.60:FF:000679">
    <property type="entry name" value="Homeobox protein aristaless"/>
    <property type="match status" value="1"/>
</dbReference>
<dbReference type="FunFam" id="1.10.10.10:FF:000031">
    <property type="entry name" value="Paired box protein Pax-7"/>
    <property type="match status" value="1"/>
</dbReference>
<dbReference type="Gene3D" id="1.10.10.60">
    <property type="entry name" value="Homeodomain-like"/>
    <property type="match status" value="1"/>
</dbReference>
<dbReference type="Gene3D" id="1.10.10.10">
    <property type="entry name" value="Winged helix-like DNA-binding domain superfamily/Winged helix DNA-binding domain"/>
    <property type="match status" value="2"/>
</dbReference>
<dbReference type="InterPro" id="IPR001356">
    <property type="entry name" value="HD"/>
</dbReference>
<dbReference type="InterPro" id="IPR017970">
    <property type="entry name" value="Homeobox_CS"/>
</dbReference>
<dbReference type="InterPro" id="IPR009057">
    <property type="entry name" value="Homeodomain-like_sf"/>
</dbReference>
<dbReference type="InterPro" id="IPR000047">
    <property type="entry name" value="HTH_motif"/>
</dbReference>
<dbReference type="InterPro" id="IPR043182">
    <property type="entry name" value="PAIRED_DNA-bd_dom"/>
</dbReference>
<dbReference type="InterPro" id="IPR001523">
    <property type="entry name" value="Paired_dom"/>
</dbReference>
<dbReference type="InterPro" id="IPR043565">
    <property type="entry name" value="PAX_fam"/>
</dbReference>
<dbReference type="InterPro" id="IPR036388">
    <property type="entry name" value="WH-like_DNA-bd_sf"/>
</dbReference>
<dbReference type="PANTHER" id="PTHR45636">
    <property type="entry name" value="PAIRED BOX PROTEIN PAX-6-RELATED-RELATED"/>
    <property type="match status" value="1"/>
</dbReference>
<dbReference type="PANTHER" id="PTHR45636:SF3">
    <property type="entry name" value="PROTEIN GOOSEBERRY-RELATED"/>
    <property type="match status" value="1"/>
</dbReference>
<dbReference type="Pfam" id="PF00046">
    <property type="entry name" value="Homeodomain"/>
    <property type="match status" value="1"/>
</dbReference>
<dbReference type="Pfam" id="PF00292">
    <property type="entry name" value="PAX"/>
    <property type="match status" value="1"/>
</dbReference>
<dbReference type="PRINTS" id="PR00031">
    <property type="entry name" value="HTHREPRESSR"/>
</dbReference>
<dbReference type="PRINTS" id="PR00027">
    <property type="entry name" value="PAIREDBOX"/>
</dbReference>
<dbReference type="SMART" id="SM00389">
    <property type="entry name" value="HOX"/>
    <property type="match status" value="1"/>
</dbReference>
<dbReference type="SMART" id="SM00351">
    <property type="entry name" value="PAX"/>
    <property type="match status" value="1"/>
</dbReference>
<dbReference type="SUPFAM" id="SSF46689">
    <property type="entry name" value="Homeodomain-like"/>
    <property type="match status" value="2"/>
</dbReference>
<dbReference type="PROSITE" id="PS00027">
    <property type="entry name" value="HOMEOBOX_1"/>
    <property type="match status" value="1"/>
</dbReference>
<dbReference type="PROSITE" id="PS50071">
    <property type="entry name" value="HOMEOBOX_2"/>
    <property type="match status" value="1"/>
</dbReference>
<dbReference type="PROSITE" id="PS00034">
    <property type="entry name" value="PAIRED_1"/>
    <property type="match status" value="1"/>
</dbReference>
<dbReference type="PROSITE" id="PS51057">
    <property type="entry name" value="PAIRED_2"/>
    <property type="match status" value="1"/>
</dbReference>
<organism>
    <name type="scientific">Drosophila melanogaster</name>
    <name type="common">Fruit fly</name>
    <dbReference type="NCBI Taxonomy" id="7227"/>
    <lineage>
        <taxon>Eukaryota</taxon>
        <taxon>Metazoa</taxon>
        <taxon>Ecdysozoa</taxon>
        <taxon>Arthropoda</taxon>
        <taxon>Hexapoda</taxon>
        <taxon>Insecta</taxon>
        <taxon>Pterygota</taxon>
        <taxon>Neoptera</taxon>
        <taxon>Endopterygota</taxon>
        <taxon>Diptera</taxon>
        <taxon>Brachycera</taxon>
        <taxon>Muscomorpha</taxon>
        <taxon>Ephydroidea</taxon>
        <taxon>Drosophilidae</taxon>
        <taxon>Drosophila</taxon>
        <taxon>Sophophora</taxon>
    </lineage>
</organism>
<accession>P09082</accession>
<accession>Q9W0W4</accession>
<comment type="function">
    <text evidence="4">Expressed in segmentally repeating pattern to define the polarity of embryonic segments.</text>
</comment>
<comment type="subcellular location">
    <subcellularLocation>
        <location>Nucleus</location>
    </subcellularLocation>
</comment>
<comment type="tissue specificity">
    <text evidence="4">Expressed in the posterior ventrolateral part of each segment throughout the embryo, including head and tail segments. At first expression is restricted to the ectoderm. During germ-band extension, expression is induced in the mesoderm.</text>
</comment>
<comment type="similarity">
    <text evidence="5">Belongs to the paired homeobox family.</text>
</comment>
<protein>
    <recommendedName>
        <fullName>Protein gooseberry</fullName>
    </recommendedName>
    <alternativeName>
        <fullName>BSH9</fullName>
    </alternativeName>
    <alternativeName>
        <fullName>Protein gooseberry distal</fullName>
    </alternativeName>
</protein>
<sequence>MAVSALNMTPYFGGYPFQGQGRVNQLGGVFINGRPLPNHIRRQIVEMAAAGVRPCVISRQLRVSHGCVSKILNRFQETGSIRPGVIGGSKPRVATPDIESRIEELKQSQPGIFSWEIRAKLIEAGVCDKQNAPSVSSISRLLRGSSGSGTSHSIDGILGGGAGSVGSEDESEDDAEPSVQLKRKQRRSRTTFSNDQIDALERIFARTQYPDVYTREELAQSTGLTEARVQVWFSNRRARLRKQLNTQQVPSFAPTSTSFGATPTTSAAPAPNMGMSLYSSQSWPSSGAYENHAAYGGSVASMSPASSTSGTSSAAHSPVQTQAQQPGTGSEFMTSTYGVGSSNATYPSAAYSMPQTPATSAEQLRSQFASAAASGSHHPSTWDSYNFAGSFFPPASAAGNHISGYHHQVDQKSSMMTTAPTYPYFGF</sequence>
<keyword id="KW-0217">Developmental protein</keyword>
<keyword id="KW-0238">DNA-binding</keyword>
<keyword id="KW-0371">Homeobox</keyword>
<keyword id="KW-0539">Nucleus</keyword>
<keyword id="KW-0563">Paired box</keyword>
<keyword id="KW-1185">Reference proteome</keyword>
<keyword id="KW-0709">Segmentation polarity protein</keyword>
<keyword id="KW-0804">Transcription</keyword>
<keyword id="KW-0805">Transcription regulation</keyword>
<reference key="1">
    <citation type="journal article" date="1987" name="Genes Dev.">
        <title>Structure of two genes at the gooseberry locus related to the paired gene and their spatial expression during Drosophila embryogenesis.</title>
        <authorList>
            <person name="Baumgartner S."/>
            <person name="Bopp D."/>
            <person name="Burri M."/>
            <person name="Noll M."/>
        </authorList>
    </citation>
    <scope>NUCLEOTIDE SEQUENCE</scope>
    <scope>FUNCTION</scope>
    <scope>TISSUE SPECIFICITY</scope>
</reference>
<reference key="2">
    <citation type="journal article" date="2000" name="Science">
        <title>The genome sequence of Drosophila melanogaster.</title>
        <authorList>
            <person name="Adams M.D."/>
            <person name="Celniker S.E."/>
            <person name="Holt R.A."/>
            <person name="Evans C.A."/>
            <person name="Gocayne J.D."/>
            <person name="Amanatides P.G."/>
            <person name="Scherer S.E."/>
            <person name="Li P.W."/>
            <person name="Hoskins R.A."/>
            <person name="Galle R.F."/>
            <person name="George R.A."/>
            <person name="Lewis S.E."/>
            <person name="Richards S."/>
            <person name="Ashburner M."/>
            <person name="Henderson S.N."/>
            <person name="Sutton G.G."/>
            <person name="Wortman J.R."/>
            <person name="Yandell M.D."/>
            <person name="Zhang Q."/>
            <person name="Chen L.X."/>
            <person name="Brandon R.C."/>
            <person name="Rogers Y.-H.C."/>
            <person name="Blazej R.G."/>
            <person name="Champe M."/>
            <person name="Pfeiffer B.D."/>
            <person name="Wan K.H."/>
            <person name="Doyle C."/>
            <person name="Baxter E.G."/>
            <person name="Helt G."/>
            <person name="Nelson C.R."/>
            <person name="Miklos G.L.G."/>
            <person name="Abril J.F."/>
            <person name="Agbayani A."/>
            <person name="An H.-J."/>
            <person name="Andrews-Pfannkoch C."/>
            <person name="Baldwin D."/>
            <person name="Ballew R.M."/>
            <person name="Basu A."/>
            <person name="Baxendale J."/>
            <person name="Bayraktaroglu L."/>
            <person name="Beasley E.M."/>
            <person name="Beeson K.Y."/>
            <person name="Benos P.V."/>
            <person name="Berman B.P."/>
            <person name="Bhandari D."/>
            <person name="Bolshakov S."/>
            <person name="Borkova D."/>
            <person name="Botchan M.R."/>
            <person name="Bouck J."/>
            <person name="Brokstein P."/>
            <person name="Brottier P."/>
            <person name="Burtis K.C."/>
            <person name="Busam D.A."/>
            <person name="Butler H."/>
            <person name="Cadieu E."/>
            <person name="Center A."/>
            <person name="Chandra I."/>
            <person name="Cherry J.M."/>
            <person name="Cawley S."/>
            <person name="Dahlke C."/>
            <person name="Davenport L.B."/>
            <person name="Davies P."/>
            <person name="de Pablos B."/>
            <person name="Delcher A."/>
            <person name="Deng Z."/>
            <person name="Mays A.D."/>
            <person name="Dew I."/>
            <person name="Dietz S.M."/>
            <person name="Dodson K."/>
            <person name="Doup L.E."/>
            <person name="Downes M."/>
            <person name="Dugan-Rocha S."/>
            <person name="Dunkov B.C."/>
            <person name="Dunn P."/>
            <person name="Durbin K.J."/>
            <person name="Evangelista C.C."/>
            <person name="Ferraz C."/>
            <person name="Ferriera S."/>
            <person name="Fleischmann W."/>
            <person name="Fosler C."/>
            <person name="Gabrielian A.E."/>
            <person name="Garg N.S."/>
            <person name="Gelbart W.M."/>
            <person name="Glasser K."/>
            <person name="Glodek A."/>
            <person name="Gong F."/>
            <person name="Gorrell J.H."/>
            <person name="Gu Z."/>
            <person name="Guan P."/>
            <person name="Harris M."/>
            <person name="Harris N.L."/>
            <person name="Harvey D.A."/>
            <person name="Heiman T.J."/>
            <person name="Hernandez J.R."/>
            <person name="Houck J."/>
            <person name="Hostin D."/>
            <person name="Houston K.A."/>
            <person name="Howland T.J."/>
            <person name="Wei M.-H."/>
            <person name="Ibegwam C."/>
            <person name="Jalali M."/>
            <person name="Kalush F."/>
            <person name="Karpen G.H."/>
            <person name="Ke Z."/>
            <person name="Kennison J.A."/>
            <person name="Ketchum K.A."/>
            <person name="Kimmel B.E."/>
            <person name="Kodira C.D."/>
            <person name="Kraft C.L."/>
            <person name="Kravitz S."/>
            <person name="Kulp D."/>
            <person name="Lai Z."/>
            <person name="Lasko P."/>
            <person name="Lei Y."/>
            <person name="Levitsky A.A."/>
            <person name="Li J.H."/>
            <person name="Li Z."/>
            <person name="Liang Y."/>
            <person name="Lin X."/>
            <person name="Liu X."/>
            <person name="Mattei B."/>
            <person name="McIntosh T.C."/>
            <person name="McLeod M.P."/>
            <person name="McPherson D."/>
            <person name="Merkulov G."/>
            <person name="Milshina N.V."/>
            <person name="Mobarry C."/>
            <person name="Morris J."/>
            <person name="Moshrefi A."/>
            <person name="Mount S.M."/>
            <person name="Moy M."/>
            <person name="Murphy B."/>
            <person name="Murphy L."/>
            <person name="Muzny D.M."/>
            <person name="Nelson D.L."/>
            <person name="Nelson D.R."/>
            <person name="Nelson K.A."/>
            <person name="Nixon K."/>
            <person name="Nusskern D.R."/>
            <person name="Pacleb J.M."/>
            <person name="Palazzolo M."/>
            <person name="Pittman G.S."/>
            <person name="Pan S."/>
            <person name="Pollard J."/>
            <person name="Puri V."/>
            <person name="Reese M.G."/>
            <person name="Reinert K."/>
            <person name="Remington K."/>
            <person name="Saunders R.D.C."/>
            <person name="Scheeler F."/>
            <person name="Shen H."/>
            <person name="Shue B.C."/>
            <person name="Siden-Kiamos I."/>
            <person name="Simpson M."/>
            <person name="Skupski M.P."/>
            <person name="Smith T.J."/>
            <person name="Spier E."/>
            <person name="Spradling A.C."/>
            <person name="Stapleton M."/>
            <person name="Strong R."/>
            <person name="Sun E."/>
            <person name="Svirskas R."/>
            <person name="Tector C."/>
            <person name="Turner R."/>
            <person name="Venter E."/>
            <person name="Wang A.H."/>
            <person name="Wang X."/>
            <person name="Wang Z.-Y."/>
            <person name="Wassarman D.A."/>
            <person name="Weinstock G.M."/>
            <person name="Weissenbach J."/>
            <person name="Williams S.M."/>
            <person name="Woodage T."/>
            <person name="Worley K.C."/>
            <person name="Wu D."/>
            <person name="Yang S."/>
            <person name="Yao Q.A."/>
            <person name="Ye J."/>
            <person name="Yeh R.-F."/>
            <person name="Zaveri J.S."/>
            <person name="Zhan M."/>
            <person name="Zhang G."/>
            <person name="Zhao Q."/>
            <person name="Zheng L."/>
            <person name="Zheng X.H."/>
            <person name="Zhong F.N."/>
            <person name="Zhong W."/>
            <person name="Zhou X."/>
            <person name="Zhu S.C."/>
            <person name="Zhu X."/>
            <person name="Smith H.O."/>
            <person name="Gibbs R.A."/>
            <person name="Myers E.W."/>
            <person name="Rubin G.M."/>
            <person name="Venter J.C."/>
        </authorList>
    </citation>
    <scope>NUCLEOTIDE SEQUENCE [LARGE SCALE GENOMIC DNA]</scope>
    <source>
        <strain>Berkeley</strain>
    </source>
</reference>
<reference key="3">
    <citation type="journal article" date="2002" name="Genome Biol.">
        <title>Annotation of the Drosophila melanogaster euchromatic genome: a systematic review.</title>
        <authorList>
            <person name="Misra S."/>
            <person name="Crosby M.A."/>
            <person name="Mungall C.J."/>
            <person name="Matthews B.B."/>
            <person name="Campbell K.S."/>
            <person name="Hradecky P."/>
            <person name="Huang Y."/>
            <person name="Kaminker J.S."/>
            <person name="Millburn G.H."/>
            <person name="Prochnik S.E."/>
            <person name="Smith C.D."/>
            <person name="Tupy J.L."/>
            <person name="Whitfield E.J."/>
            <person name="Bayraktaroglu L."/>
            <person name="Berman B.P."/>
            <person name="Bettencourt B.R."/>
            <person name="Celniker S.E."/>
            <person name="de Grey A.D.N.J."/>
            <person name="Drysdale R.A."/>
            <person name="Harris N.L."/>
            <person name="Richter J."/>
            <person name="Russo S."/>
            <person name="Schroeder A.J."/>
            <person name="Shu S.Q."/>
            <person name="Stapleton M."/>
            <person name="Yamada C."/>
            <person name="Ashburner M."/>
            <person name="Gelbart W.M."/>
            <person name="Rubin G.M."/>
            <person name="Lewis S.E."/>
        </authorList>
    </citation>
    <scope>GENOME REANNOTATION</scope>
    <source>
        <strain>Berkeley</strain>
    </source>
</reference>
<reference key="4">
    <citation type="journal article" date="1986" name="Cell">
        <title>Conservation of a large protein domain in the segmentation gene paired and in functionally related genes of Drosophila.</title>
        <authorList>
            <person name="Bopp D."/>
            <person name="Burri M."/>
            <person name="Baumgartner S."/>
            <person name="Frigerio G."/>
            <person name="Noll M."/>
        </authorList>
    </citation>
    <scope>NUCLEOTIDE SEQUENCE [MRNA] OF 9-148 AND 165-244</scope>
</reference>
<feature type="chain" id="PRO_0000050168" description="Protein gooseberry">
    <location>
        <begin position="1"/>
        <end position="427"/>
    </location>
</feature>
<feature type="DNA-binding region" description="Paired" evidence="2">
    <location>
        <begin position="19"/>
        <end position="145"/>
    </location>
</feature>
<feature type="DNA-binding region" description="Homeobox" evidence="1">
    <location>
        <begin position="185"/>
        <end position="244"/>
    </location>
</feature>
<feature type="region of interest" description="PAI subdomain" evidence="2">
    <location>
        <begin position="22"/>
        <end position="78"/>
    </location>
</feature>
<feature type="region of interest" description="RED subdomain" evidence="2">
    <location>
        <begin position="97"/>
        <end position="145"/>
    </location>
</feature>
<feature type="region of interest" description="Disordered" evidence="3">
    <location>
        <begin position="142"/>
        <end position="192"/>
    </location>
</feature>
<feature type="region of interest" description="Disordered" evidence="3">
    <location>
        <begin position="248"/>
        <end position="267"/>
    </location>
</feature>
<feature type="region of interest" description="Disordered" evidence="3">
    <location>
        <begin position="300"/>
        <end position="336"/>
    </location>
</feature>
<feature type="compositionally biased region" description="Low complexity" evidence="3">
    <location>
        <begin position="142"/>
        <end position="156"/>
    </location>
</feature>
<feature type="compositionally biased region" description="Acidic residues" evidence="3">
    <location>
        <begin position="167"/>
        <end position="176"/>
    </location>
</feature>
<feature type="compositionally biased region" description="Low complexity" evidence="3">
    <location>
        <begin position="253"/>
        <end position="267"/>
    </location>
</feature>
<feature type="compositionally biased region" description="Low complexity" evidence="3">
    <location>
        <begin position="300"/>
        <end position="317"/>
    </location>
</feature>
<feature type="compositionally biased region" description="Polar residues" evidence="3">
    <location>
        <begin position="318"/>
        <end position="336"/>
    </location>
</feature>
<evidence type="ECO:0000255" key="1">
    <source>
        <dbReference type="PROSITE-ProRule" id="PRU00108"/>
    </source>
</evidence>
<evidence type="ECO:0000255" key="2">
    <source>
        <dbReference type="PROSITE-ProRule" id="PRU00381"/>
    </source>
</evidence>
<evidence type="ECO:0000256" key="3">
    <source>
        <dbReference type="SAM" id="MobiDB-lite"/>
    </source>
</evidence>
<evidence type="ECO:0000269" key="4">
    <source>
    </source>
</evidence>
<evidence type="ECO:0000305" key="5"/>
<name>GSB_DROME</name>